<protein>
    <recommendedName>
        <fullName>Methyl-CpG-binding domain protein 3-like 4</fullName>
        <shortName>MBD3-like protein 4</shortName>
    </recommendedName>
</protein>
<comment type="miscellaneous">
    <text>The MBD3L proteins are encoded by strongly repeated regions of the 19p13 chromosome. The exact number of functional copies is unclear, and some of them may represent pseudogenes.</text>
</comment>
<comment type="similarity">
    <text evidence="1">Belongs to the MBD3L family.</text>
</comment>
<name>MB3L4_HUMAN</name>
<reference key="1">
    <citation type="journal article" date="2004" name="Nature">
        <title>The DNA sequence and biology of human chromosome 19.</title>
        <authorList>
            <person name="Grimwood J."/>
            <person name="Gordon L.A."/>
            <person name="Olsen A.S."/>
            <person name="Terry A."/>
            <person name="Schmutz J."/>
            <person name="Lamerdin J.E."/>
            <person name="Hellsten U."/>
            <person name="Goodstein D."/>
            <person name="Couronne O."/>
            <person name="Tran-Gyamfi M."/>
            <person name="Aerts A."/>
            <person name="Altherr M."/>
            <person name="Ashworth L."/>
            <person name="Bajorek E."/>
            <person name="Black S."/>
            <person name="Branscomb E."/>
            <person name="Caenepeel S."/>
            <person name="Carrano A.V."/>
            <person name="Caoile C."/>
            <person name="Chan Y.M."/>
            <person name="Christensen M."/>
            <person name="Cleland C.A."/>
            <person name="Copeland A."/>
            <person name="Dalin E."/>
            <person name="Dehal P."/>
            <person name="Denys M."/>
            <person name="Detter J.C."/>
            <person name="Escobar J."/>
            <person name="Flowers D."/>
            <person name="Fotopulos D."/>
            <person name="Garcia C."/>
            <person name="Georgescu A.M."/>
            <person name="Glavina T."/>
            <person name="Gomez M."/>
            <person name="Gonzales E."/>
            <person name="Groza M."/>
            <person name="Hammon N."/>
            <person name="Hawkins T."/>
            <person name="Haydu L."/>
            <person name="Ho I."/>
            <person name="Huang W."/>
            <person name="Israni S."/>
            <person name="Jett J."/>
            <person name="Kadner K."/>
            <person name="Kimball H."/>
            <person name="Kobayashi A."/>
            <person name="Larionov V."/>
            <person name="Leem S.-H."/>
            <person name="Lopez F."/>
            <person name="Lou Y."/>
            <person name="Lowry S."/>
            <person name="Malfatti S."/>
            <person name="Martinez D."/>
            <person name="McCready P.M."/>
            <person name="Medina C."/>
            <person name="Morgan J."/>
            <person name="Nelson K."/>
            <person name="Nolan M."/>
            <person name="Ovcharenko I."/>
            <person name="Pitluck S."/>
            <person name="Pollard M."/>
            <person name="Popkie A.P."/>
            <person name="Predki P."/>
            <person name="Quan G."/>
            <person name="Ramirez L."/>
            <person name="Rash S."/>
            <person name="Retterer J."/>
            <person name="Rodriguez A."/>
            <person name="Rogers S."/>
            <person name="Salamov A."/>
            <person name="Salazar A."/>
            <person name="She X."/>
            <person name="Smith D."/>
            <person name="Slezak T."/>
            <person name="Solovyev V."/>
            <person name="Thayer N."/>
            <person name="Tice H."/>
            <person name="Tsai M."/>
            <person name="Ustaszewska A."/>
            <person name="Vo N."/>
            <person name="Wagner M."/>
            <person name="Wheeler J."/>
            <person name="Wu K."/>
            <person name="Xie G."/>
            <person name="Yang J."/>
            <person name="Dubchak I."/>
            <person name="Furey T.S."/>
            <person name="DeJong P."/>
            <person name="Dickson M."/>
            <person name="Gordon D."/>
            <person name="Eichler E.E."/>
            <person name="Pennacchio L.A."/>
            <person name="Richardson P."/>
            <person name="Stubbs L."/>
            <person name="Rokhsar D.S."/>
            <person name="Myers R.M."/>
            <person name="Rubin E.M."/>
            <person name="Lucas S.M."/>
        </authorList>
    </citation>
    <scope>NUCLEOTIDE SEQUENCE [LARGE SCALE GENOMIC DNA]</scope>
</reference>
<accession>A6NDZ8</accession>
<keyword id="KW-1185">Reference proteome</keyword>
<keyword id="KW-0678">Repressor</keyword>
<keyword id="KW-0804">Transcription</keyword>
<keyword id="KW-0805">Transcription regulation</keyword>
<organism>
    <name type="scientific">Homo sapiens</name>
    <name type="common">Human</name>
    <dbReference type="NCBI Taxonomy" id="9606"/>
    <lineage>
        <taxon>Eukaryota</taxon>
        <taxon>Metazoa</taxon>
        <taxon>Chordata</taxon>
        <taxon>Craniata</taxon>
        <taxon>Vertebrata</taxon>
        <taxon>Euteleostomi</taxon>
        <taxon>Mammalia</taxon>
        <taxon>Eutheria</taxon>
        <taxon>Euarchontoglires</taxon>
        <taxon>Primates</taxon>
        <taxon>Haplorrhini</taxon>
        <taxon>Catarrhini</taxon>
        <taxon>Hominidae</taxon>
        <taxon>Homo</taxon>
    </lineage>
</organism>
<sequence>MGEPAFTSFPSPPVLGKLKRNMMPWALQKKREIHMAKAHRRRAARSALPMRLTSCIFRRPVTRIRSHPDNQVRRRKGDEHLEKPQQLCAYRRLQALQPCSSQGEGSSPLHLESVLSILAPGTAGESLDRAGAERVRIPLEPTPGRFPAVAGGPTPGMGCQLPPPLSGQLVTPADIRRQARRVKKARERLAKALQADRLARQAEMLTCR</sequence>
<dbReference type="EMBL" id="AC010606">
    <property type="status" value="NOT_ANNOTATED_CDS"/>
    <property type="molecule type" value="Genomic_DNA"/>
</dbReference>
<dbReference type="CCDS" id="CCDS54205.1"/>
<dbReference type="RefSeq" id="NP_001157891.1">
    <property type="nucleotide sequence ID" value="NM_001164419.3"/>
</dbReference>
<dbReference type="SMR" id="A6NDZ8"/>
<dbReference type="FunCoup" id="A6NDZ8">
    <property type="interactions" value="362"/>
</dbReference>
<dbReference type="STRING" id="9606.ENSP00000370801"/>
<dbReference type="GlyGen" id="A6NDZ8">
    <property type="glycosylation" value="2 sites"/>
</dbReference>
<dbReference type="BioMuta" id="MBD3L4"/>
<dbReference type="MassIVE" id="A6NDZ8"/>
<dbReference type="PaxDb" id="9606-ENSP00000370801"/>
<dbReference type="PeptideAtlas" id="A6NDZ8"/>
<dbReference type="DNASU" id="653656"/>
<dbReference type="Ensembl" id="ENST00000381394.9">
    <property type="protein sequence ID" value="ENSP00000370801.4"/>
    <property type="gene ID" value="ENSG00000205718.10"/>
</dbReference>
<dbReference type="GeneID" id="653656"/>
<dbReference type="KEGG" id="hsa:653656"/>
<dbReference type="MANE-Select" id="ENST00000381394.9">
    <property type="protein sequence ID" value="ENSP00000370801.4"/>
    <property type="RefSeq nucleotide sequence ID" value="NM_001164419.3"/>
    <property type="RefSeq protein sequence ID" value="NP_001157891.1"/>
</dbReference>
<dbReference type="UCSC" id="uc021unr.2">
    <property type="organism name" value="human"/>
</dbReference>
<dbReference type="AGR" id="HGNC:37206"/>
<dbReference type="CTD" id="653656"/>
<dbReference type="GeneCards" id="MBD3L4"/>
<dbReference type="HGNC" id="HGNC:37206">
    <property type="gene designation" value="MBD3L4"/>
</dbReference>
<dbReference type="HPA" id="ENSG00000205718">
    <property type="expression patterns" value="Not detected"/>
</dbReference>
<dbReference type="neXtProt" id="NX_A6NDZ8"/>
<dbReference type="VEuPathDB" id="HostDB:ENSG00000205718"/>
<dbReference type="eggNOG" id="KOG4161">
    <property type="taxonomic scope" value="Eukaryota"/>
</dbReference>
<dbReference type="GeneTree" id="ENSGT00950000183005"/>
<dbReference type="InParanoid" id="A6NDZ8"/>
<dbReference type="OrthoDB" id="13533at9604"/>
<dbReference type="PAN-GO" id="A6NDZ8">
    <property type="GO annotations" value="0 GO annotations based on evolutionary models"/>
</dbReference>
<dbReference type="PhylomeDB" id="A6NDZ8"/>
<dbReference type="TreeFam" id="TF325032"/>
<dbReference type="PathwayCommons" id="A6NDZ8"/>
<dbReference type="BioGRID-ORCS" id="653656">
    <property type="hits" value="30 hits in 304 CRISPR screens"/>
</dbReference>
<dbReference type="GenomeRNAi" id="653656"/>
<dbReference type="Pharos" id="A6NDZ8">
    <property type="development level" value="Tdark"/>
</dbReference>
<dbReference type="Proteomes" id="UP000005640">
    <property type="component" value="Chromosome 19"/>
</dbReference>
<dbReference type="RNAct" id="A6NDZ8">
    <property type="molecule type" value="protein"/>
</dbReference>
<dbReference type="GO" id="GO:0005634">
    <property type="term" value="C:nucleus"/>
    <property type="evidence" value="ECO:0000318"/>
    <property type="project" value="GO_Central"/>
</dbReference>
<dbReference type="GO" id="GO:0008327">
    <property type="term" value="F:methyl-CpG binding"/>
    <property type="evidence" value="ECO:0000318"/>
    <property type="project" value="GO_Central"/>
</dbReference>
<dbReference type="GO" id="GO:0006346">
    <property type="term" value="P:DNA methylation-dependent constitutive heterochromatin formation"/>
    <property type="evidence" value="ECO:0000318"/>
    <property type="project" value="GO_Central"/>
</dbReference>
<dbReference type="GO" id="GO:0000122">
    <property type="term" value="P:negative regulation of transcription by RNA polymerase II"/>
    <property type="evidence" value="ECO:0000318"/>
    <property type="project" value="GO_Central"/>
</dbReference>
<dbReference type="InterPro" id="IPR032343">
    <property type="entry name" value="MBD2/MBD3_p55-bd"/>
</dbReference>
<dbReference type="InterPro" id="IPR025884">
    <property type="entry name" value="MeCpG-bd_2/3_C_dom"/>
</dbReference>
<dbReference type="Pfam" id="PF14048">
    <property type="entry name" value="MBD_C"/>
    <property type="match status" value="1"/>
</dbReference>
<dbReference type="Pfam" id="PF16564">
    <property type="entry name" value="MBDa"/>
    <property type="match status" value="1"/>
</dbReference>
<gene>
    <name type="primary">MBD3L4</name>
</gene>
<proteinExistence type="inferred from homology"/>
<evidence type="ECO:0000305" key="1"/>
<feature type="chain" id="PRO_0000349234" description="Methyl-CpG-binding domain protein 3-like 4">
    <location>
        <begin position="1"/>
        <end position="208"/>
    </location>
</feature>